<gene>
    <name type="primary">PEX16</name>
</gene>
<sequence length="336" mass="38629">MEKLRLLGLRYQEYVTRHPAATAQLETAVRGFSYLLAGRFADSHELSELVYSASNLLVLLNDGILRKELRKKLPVSLSQQKLLTWLSVLECVEVFMEMGAAKVWGEVGRWLVIALVQLAKAVLRMLLLLWFKAGLQTSPPIVPLDRETQAQPPDGDHSPGNHEQSYVGKRSNRVVRTLQNTPSLHSRHWGAPQQREGRQQQHHEELSATPTPLGLQETIAEFLYIARPLLHLLSLGLWGQRSWKPWLLAGVVDVTSLSLLSDRKGLTRRERRELRRRTILLLYYLLRSPFYDRFSEARILFLLQLLADHVPGVGLVTRPLMDYLPTWQKIYFYSWG</sequence>
<organism>
    <name type="scientific">Homo sapiens</name>
    <name type="common">Human</name>
    <dbReference type="NCBI Taxonomy" id="9606"/>
    <lineage>
        <taxon>Eukaryota</taxon>
        <taxon>Metazoa</taxon>
        <taxon>Chordata</taxon>
        <taxon>Craniata</taxon>
        <taxon>Vertebrata</taxon>
        <taxon>Euteleostomi</taxon>
        <taxon>Mammalia</taxon>
        <taxon>Eutheria</taxon>
        <taxon>Euarchontoglires</taxon>
        <taxon>Primates</taxon>
        <taxon>Haplorrhini</taxon>
        <taxon>Catarrhini</taxon>
        <taxon>Hominidae</taxon>
        <taxon>Homo</taxon>
    </lineage>
</organism>
<protein>
    <recommendedName>
        <fullName>Peroxisomal membrane protein PEX16</fullName>
    </recommendedName>
    <alternativeName>
        <fullName>Peroxin-16</fullName>
    </alternativeName>
    <alternativeName>
        <fullName>Peroxisomal biogenesis factor 16</fullName>
    </alternativeName>
</protein>
<feature type="chain" id="PRO_0000058330" description="Peroxisomal membrane protein PEX16">
    <location>
        <begin position="1"/>
        <end position="336"/>
    </location>
</feature>
<feature type="topological domain" description="Cytoplasmic" evidence="1">
    <location>
        <begin position="1"/>
        <end position="84"/>
    </location>
</feature>
<feature type="transmembrane region" description="Helical" evidence="1">
    <location>
        <begin position="85"/>
        <end position="105"/>
    </location>
</feature>
<feature type="topological domain" description="Peroxisomal" evidence="1">
    <location>
        <begin position="106"/>
        <end position="110"/>
    </location>
</feature>
<feature type="transmembrane region" description="Helical" evidence="1">
    <location>
        <begin position="111"/>
        <end position="131"/>
    </location>
</feature>
<feature type="topological domain" description="Cytoplasmic" evidence="1">
    <location>
        <begin position="132"/>
        <end position="336"/>
    </location>
</feature>
<feature type="region of interest" description="Required for peroxisomal location" evidence="4">
    <location>
        <begin position="66"/>
        <end position="81"/>
    </location>
</feature>
<feature type="region of interest" description="Disordered" evidence="2">
    <location>
        <begin position="142"/>
        <end position="171"/>
    </location>
</feature>
<feature type="region of interest" description="Disordered" evidence="2">
    <location>
        <begin position="184"/>
        <end position="210"/>
    </location>
</feature>
<feature type="region of interest" description="Interaction with PEX19" evidence="4">
    <location>
        <begin position="221"/>
        <end position="336"/>
    </location>
</feature>
<feature type="compositionally biased region" description="Basic and acidic residues" evidence="2">
    <location>
        <begin position="144"/>
        <end position="160"/>
    </location>
</feature>
<feature type="compositionally biased region" description="Basic and acidic residues" evidence="2">
    <location>
        <begin position="195"/>
        <end position="206"/>
    </location>
</feature>
<feature type="splice variant" id="VSP_036593" description="In isoform 2." evidence="13">
    <original>RPLMDYLPTWQKIYFYSWG</original>
    <variation>TSQRAASPCLPARPHTQPWSPPAFLPGHP</variation>
    <location>
        <begin position="318"/>
        <end position="336"/>
    </location>
</feature>
<feature type="sequence variant" id="VAR_051272" description="In dbSNP:rs11553094.">
    <original>V</original>
    <variation>M</variation>
    <location>
        <position position="103"/>
    </location>
</feature>
<feature type="sequence variant" id="VAR_061841" description="In dbSNP:rs10742772." evidence="7 11 12">
    <original>V</original>
    <variation>I</variation>
    <location>
        <position position="116"/>
    </location>
</feature>
<feature type="sequence variant" id="VAR_069208" description="In PBD8B." evidence="9">
    <location>
        <position position="252"/>
    </location>
</feature>
<feature type="sequence variant" id="VAR_034145" description="In dbSNP:rs35214605.">
    <original>V</original>
    <variation>L</variation>
    <location>
        <position position="254"/>
    </location>
</feature>
<feature type="sequence variant" id="VAR_069209" description="In PBD8B." evidence="9">
    <original>P</original>
    <variation>T</variation>
    <location>
        <position position="289"/>
    </location>
</feature>
<feature type="sequence variant" id="VAR_069210" description="In PBD8B; dbSNP:rs397514472." evidence="9">
    <original>Y</original>
    <variation>C</variation>
    <location>
        <position position="331"/>
    </location>
</feature>
<feature type="sequence conflict" description="In Ref. 4; AAH00467." evidence="14" ref="4">
    <original>V</original>
    <variation>L</variation>
    <location>
        <position position="107"/>
    </location>
</feature>
<feature type="sequence conflict" description="In Ref. 4; AAH00467." evidence="14" ref="4">
    <original>M</original>
    <variation>I</variation>
    <location>
        <position position="125"/>
    </location>
</feature>
<name>PEX16_HUMAN</name>
<accession>Q9Y5Y5</accession>
<accession>Q9BWB9</accession>
<keyword id="KW-0025">Alternative splicing</keyword>
<keyword id="KW-0225">Disease variant</keyword>
<keyword id="KW-0472">Membrane</keyword>
<keyword id="KW-0576">Peroxisome</keyword>
<keyword id="KW-0962">Peroxisome biogenesis</keyword>
<keyword id="KW-0958">Peroxisome biogenesis disorder</keyword>
<keyword id="KW-1267">Proteomics identification</keyword>
<keyword id="KW-1185">Reference proteome</keyword>
<keyword id="KW-0812">Transmembrane</keyword>
<keyword id="KW-1133">Transmembrane helix</keyword>
<keyword id="KW-0861">Zellweger syndrome</keyword>
<dbReference type="EMBL" id="AB016531">
    <property type="protein sequence ID" value="BAA88826.1"/>
    <property type="molecule type" value="mRNA"/>
</dbReference>
<dbReference type="EMBL" id="AF118240">
    <property type="protein sequence ID" value="AAD22466.1"/>
    <property type="molecule type" value="mRNA"/>
</dbReference>
<dbReference type="EMBL" id="AC068385">
    <property type="status" value="NOT_ANNOTATED_CDS"/>
    <property type="molecule type" value="Genomic_DNA"/>
</dbReference>
<dbReference type="EMBL" id="BC004356">
    <property type="protein sequence ID" value="AAH04356.1"/>
    <property type="molecule type" value="mRNA"/>
</dbReference>
<dbReference type="EMBL" id="BC000467">
    <property type="protein sequence ID" value="AAH00467.1"/>
    <property type="molecule type" value="mRNA"/>
</dbReference>
<dbReference type="CCDS" id="CCDS31472.1">
    <molecule id="Q9Y5Y5-1"/>
</dbReference>
<dbReference type="CCDS" id="CCDS7917.1">
    <molecule id="Q9Y5Y5-2"/>
</dbReference>
<dbReference type="RefSeq" id="NP_004804.2">
    <molecule id="Q9Y5Y5-1"/>
    <property type="nucleotide sequence ID" value="NM_004813.4"/>
</dbReference>
<dbReference type="RefSeq" id="NP_476515.2">
    <molecule id="Q9Y5Y5-2"/>
    <property type="nucleotide sequence ID" value="NM_057174.3"/>
</dbReference>
<dbReference type="BioGRID" id="114804">
    <property type="interactions" value="63"/>
</dbReference>
<dbReference type="FunCoup" id="Q9Y5Y5">
    <property type="interactions" value="2495"/>
</dbReference>
<dbReference type="IntAct" id="Q9Y5Y5">
    <property type="interactions" value="49"/>
</dbReference>
<dbReference type="MINT" id="Q9Y5Y5"/>
<dbReference type="STRING" id="9606.ENSP00000241041"/>
<dbReference type="ChEMBL" id="CHEMBL3774297"/>
<dbReference type="TCDB" id="9.A.17.1.2">
    <property type="family name" value="the integral membrane peroxisomal protein importer-2 (ppi2) family"/>
</dbReference>
<dbReference type="iPTMnet" id="Q9Y5Y5"/>
<dbReference type="PhosphoSitePlus" id="Q9Y5Y5"/>
<dbReference type="BioMuta" id="PEX16"/>
<dbReference type="DMDM" id="332278135"/>
<dbReference type="jPOST" id="Q9Y5Y5"/>
<dbReference type="MassIVE" id="Q9Y5Y5"/>
<dbReference type="PaxDb" id="9606-ENSP00000241041"/>
<dbReference type="PeptideAtlas" id="Q9Y5Y5"/>
<dbReference type="ProteomicsDB" id="86541">
    <molecule id="Q9Y5Y5-1"/>
</dbReference>
<dbReference type="ProteomicsDB" id="86542">
    <molecule id="Q9Y5Y5-2"/>
</dbReference>
<dbReference type="Pumba" id="Q9Y5Y5"/>
<dbReference type="Antibodypedia" id="26211">
    <property type="antibodies" value="125 antibodies from 26 providers"/>
</dbReference>
<dbReference type="DNASU" id="9409"/>
<dbReference type="Ensembl" id="ENST00000241041.7">
    <molecule id="Q9Y5Y5-2"/>
    <property type="protein sequence ID" value="ENSP00000241041.3"/>
    <property type="gene ID" value="ENSG00000121680.16"/>
</dbReference>
<dbReference type="Ensembl" id="ENST00000378750.10">
    <molecule id="Q9Y5Y5-1"/>
    <property type="protein sequence ID" value="ENSP00000368024.5"/>
    <property type="gene ID" value="ENSG00000121680.16"/>
</dbReference>
<dbReference type="GeneID" id="9409"/>
<dbReference type="KEGG" id="hsa:9409"/>
<dbReference type="MANE-Select" id="ENST00000378750.10">
    <property type="protein sequence ID" value="ENSP00000368024.5"/>
    <property type="RefSeq nucleotide sequence ID" value="NM_004813.4"/>
    <property type="RefSeq protein sequence ID" value="NP_004804.2"/>
</dbReference>
<dbReference type="UCSC" id="uc001nbt.4">
    <molecule id="Q9Y5Y5-1"/>
    <property type="organism name" value="human"/>
</dbReference>
<dbReference type="AGR" id="HGNC:8857"/>
<dbReference type="CTD" id="9409"/>
<dbReference type="DisGeNET" id="9409"/>
<dbReference type="GeneCards" id="PEX16"/>
<dbReference type="GeneReviews" id="PEX16"/>
<dbReference type="HGNC" id="HGNC:8857">
    <property type="gene designation" value="PEX16"/>
</dbReference>
<dbReference type="HPA" id="ENSG00000121680">
    <property type="expression patterns" value="Low tissue specificity"/>
</dbReference>
<dbReference type="MalaCards" id="PEX16"/>
<dbReference type="MIM" id="603360">
    <property type="type" value="gene"/>
</dbReference>
<dbReference type="MIM" id="614876">
    <property type="type" value="phenotype"/>
</dbReference>
<dbReference type="MIM" id="614877">
    <property type="type" value="phenotype"/>
</dbReference>
<dbReference type="neXtProt" id="NX_Q9Y5Y5"/>
<dbReference type="OpenTargets" id="ENSG00000121680"/>
<dbReference type="Orphanet" id="642954">
    <property type="disease" value="Autosomal recessive ataxia due to PEX16 deficiency"/>
</dbReference>
<dbReference type="Orphanet" id="772">
    <property type="disease" value="Infantile Refsum disease"/>
</dbReference>
<dbReference type="Orphanet" id="44">
    <property type="disease" value="Neonatal adrenoleukodystrophy"/>
</dbReference>
<dbReference type="Orphanet" id="912">
    <property type="disease" value="Zellweger syndrome"/>
</dbReference>
<dbReference type="PharmGKB" id="PA33199"/>
<dbReference type="VEuPathDB" id="HostDB:ENSG00000121680"/>
<dbReference type="eggNOG" id="KOG4546">
    <property type="taxonomic scope" value="Eukaryota"/>
</dbReference>
<dbReference type="GeneTree" id="ENSGT00390000017790"/>
<dbReference type="HOGENOM" id="CLU_070601_0_0_1"/>
<dbReference type="InParanoid" id="Q9Y5Y5"/>
<dbReference type="OMA" id="PTWQSTY"/>
<dbReference type="OrthoDB" id="2021143at2759"/>
<dbReference type="PAN-GO" id="Q9Y5Y5">
    <property type="GO annotations" value="2 GO annotations based on evolutionary models"/>
</dbReference>
<dbReference type="TreeFam" id="TF324139"/>
<dbReference type="PathwayCommons" id="Q9Y5Y5"/>
<dbReference type="Reactome" id="R-HSA-9603798">
    <property type="pathway name" value="Class I peroxisomal membrane protein import"/>
</dbReference>
<dbReference type="SignaLink" id="Q9Y5Y5"/>
<dbReference type="BioGRID-ORCS" id="9409">
    <property type="hits" value="34 hits in 1160 CRISPR screens"/>
</dbReference>
<dbReference type="ChiTaRS" id="PEX16">
    <property type="organism name" value="human"/>
</dbReference>
<dbReference type="GeneWiki" id="PEX16"/>
<dbReference type="GenomeRNAi" id="9409"/>
<dbReference type="Pharos" id="Q9Y5Y5">
    <property type="development level" value="Tbio"/>
</dbReference>
<dbReference type="PRO" id="PR:Q9Y5Y5"/>
<dbReference type="Proteomes" id="UP000005640">
    <property type="component" value="Chromosome 11"/>
</dbReference>
<dbReference type="RNAct" id="Q9Y5Y5">
    <property type="molecule type" value="protein"/>
</dbReference>
<dbReference type="Bgee" id="ENSG00000121680">
    <property type="expression patterns" value="Expressed in prefrontal cortex and 192 other cell types or tissues"/>
</dbReference>
<dbReference type="ExpressionAtlas" id="Q9Y5Y5">
    <property type="expression patterns" value="baseline and differential"/>
</dbReference>
<dbReference type="GO" id="GO:0005829">
    <property type="term" value="C:cytosol"/>
    <property type="evidence" value="ECO:0000304"/>
    <property type="project" value="Reactome"/>
</dbReference>
<dbReference type="GO" id="GO:0005783">
    <property type="term" value="C:endoplasmic reticulum"/>
    <property type="evidence" value="ECO:0000314"/>
    <property type="project" value="UniProtKB"/>
</dbReference>
<dbReference type="GO" id="GO:0005789">
    <property type="term" value="C:endoplasmic reticulum membrane"/>
    <property type="evidence" value="ECO:0000314"/>
    <property type="project" value="UniProtKB"/>
</dbReference>
<dbReference type="GO" id="GO:0016020">
    <property type="term" value="C:membrane"/>
    <property type="evidence" value="ECO:0007005"/>
    <property type="project" value="UniProtKB"/>
</dbReference>
<dbReference type="GO" id="GO:0005778">
    <property type="term" value="C:peroxisomal membrane"/>
    <property type="evidence" value="ECO:0000314"/>
    <property type="project" value="UniProtKB"/>
</dbReference>
<dbReference type="GO" id="GO:0005777">
    <property type="term" value="C:peroxisome"/>
    <property type="evidence" value="ECO:0000314"/>
    <property type="project" value="UniProtKB"/>
</dbReference>
<dbReference type="GO" id="GO:0106101">
    <property type="term" value="P:ER-dependent peroxisome localization"/>
    <property type="evidence" value="ECO:0000314"/>
    <property type="project" value="UniProtKB"/>
</dbReference>
<dbReference type="GO" id="GO:0032581">
    <property type="term" value="P:ER-dependent peroxisome organization"/>
    <property type="evidence" value="ECO:0000314"/>
    <property type="project" value="UniProtKB"/>
</dbReference>
<dbReference type="GO" id="GO:0016557">
    <property type="term" value="P:peroxisome membrane biogenesis"/>
    <property type="evidence" value="ECO:0000315"/>
    <property type="project" value="UniProtKB"/>
</dbReference>
<dbReference type="GO" id="GO:0007031">
    <property type="term" value="P:peroxisome organization"/>
    <property type="evidence" value="ECO:0000315"/>
    <property type="project" value="UniProtKB"/>
</dbReference>
<dbReference type="GO" id="GO:0016558">
    <property type="term" value="P:protein import into peroxisome matrix"/>
    <property type="evidence" value="ECO:0000315"/>
    <property type="project" value="MGI"/>
</dbReference>
<dbReference type="GO" id="GO:0045046">
    <property type="term" value="P:protein import into peroxisome membrane"/>
    <property type="evidence" value="ECO:0000315"/>
    <property type="project" value="UniProtKB"/>
</dbReference>
<dbReference type="GO" id="GO:0006625">
    <property type="term" value="P:protein targeting to peroxisome"/>
    <property type="evidence" value="ECO:0000315"/>
    <property type="project" value="UniProtKB"/>
</dbReference>
<dbReference type="GO" id="GO:0022615">
    <property type="term" value="P:protein to membrane docking"/>
    <property type="evidence" value="ECO:0000314"/>
    <property type="project" value="UniProtKB"/>
</dbReference>
<dbReference type="InterPro" id="IPR013919">
    <property type="entry name" value="Pex16"/>
</dbReference>
<dbReference type="PANTHER" id="PTHR13299">
    <property type="entry name" value="PEROXISOMAL MEMBRANE PROTEIN PEX16"/>
    <property type="match status" value="1"/>
</dbReference>
<dbReference type="PANTHER" id="PTHR13299:SF0">
    <property type="entry name" value="PEROXISOMAL MEMBRANE PROTEIN PEX16"/>
    <property type="match status" value="1"/>
</dbReference>
<dbReference type="Pfam" id="PF08610">
    <property type="entry name" value="Pex16"/>
    <property type="match status" value="1"/>
</dbReference>
<comment type="function">
    <text evidence="3 5 8">Required for peroxisome membrane biogenesis. May play a role in early stages of peroxisome assembly. Can recruit other peroxisomal proteins, such as PEX3 and PMP34, to de novo peroxisomes derived from the endoplasmic reticulum (ER). May function as receptor for PEX3.</text>
</comment>
<comment type="subunit">
    <text evidence="3 4 6">Interacts with PEX19.</text>
</comment>
<comment type="interaction">
    <interactant intactId="EBI-981985">
        <id>Q9Y5Y5</id>
    </interactant>
    <interactant intactId="EBI-13059134">
        <id>Q13520</id>
        <label>AQP6</label>
    </interactant>
    <organismsDiffer>false</organismsDiffer>
    <experiments>3</experiments>
</comment>
<comment type="interaction">
    <interactant intactId="EBI-981985">
        <id>Q9Y5Y5</id>
    </interactant>
    <interactant intactId="EBI-2873246">
        <id>Q8IUN9</id>
        <label>CLEC10A</label>
    </interactant>
    <organismsDiffer>false</organismsDiffer>
    <experiments>3</experiments>
</comment>
<comment type="interaction">
    <interactant intactId="EBI-981985">
        <id>Q9Y5Y5</id>
    </interactant>
    <interactant intactId="EBI-6942903">
        <id>Q96BA8</id>
        <label>CREB3L1</label>
    </interactant>
    <organismsDiffer>false</organismsDiffer>
    <experiments>3</experiments>
</comment>
<comment type="interaction">
    <interactant intactId="EBI-981985">
        <id>Q9Y5Y5</id>
    </interactant>
    <interactant intactId="EBI-724515">
        <id>O95424</id>
        <label>DEXI</label>
    </interactant>
    <organismsDiffer>false</organismsDiffer>
    <experiments>3</experiments>
</comment>
<comment type="interaction">
    <interactant intactId="EBI-981985">
        <id>Q9Y5Y5</id>
    </interactant>
    <interactant intactId="EBI-8787095">
        <id>O00559</id>
        <label>EBAG9</label>
    </interactant>
    <organismsDiffer>false</organismsDiffer>
    <experiments>3</experiments>
</comment>
<comment type="interaction">
    <interactant intactId="EBI-981985">
        <id>Q9Y5Y5</id>
    </interactant>
    <interactant intactId="EBI-781551">
        <id>Q9Y282</id>
        <label>ERGIC3</label>
    </interactant>
    <organismsDiffer>false</organismsDiffer>
    <experiments>3</experiments>
</comment>
<comment type="interaction">
    <interactant intactId="EBI-981985">
        <id>Q9Y5Y5</id>
    </interactant>
    <interactant intactId="EBI-2833872">
        <id>O15552</id>
        <label>FFAR2</label>
    </interactant>
    <organismsDiffer>false</organismsDiffer>
    <experiments>3</experiments>
</comment>
<comment type="interaction">
    <interactant intactId="EBI-981985">
        <id>Q9Y5Y5</id>
    </interactant>
    <interactant intactId="EBI-13345167">
        <id>Q8TDT2</id>
        <label>GPR152</label>
    </interactant>
    <organismsDiffer>false</organismsDiffer>
    <experiments>3</experiments>
</comment>
<comment type="interaction">
    <interactant intactId="EBI-981985">
        <id>Q9Y5Y5</id>
    </interactant>
    <interactant intactId="EBI-12017638">
        <id>P48051</id>
        <label>KCNJ6</label>
    </interactant>
    <organismsDiffer>false</organismsDiffer>
    <experiments>3</experiments>
</comment>
<comment type="interaction">
    <interactant intactId="EBI-981985">
        <id>Q9Y5Y5</id>
    </interactant>
    <interactant intactId="EBI-750776">
        <id>O95214</id>
        <label>LEPROTL1</label>
    </interactant>
    <organismsDiffer>false</organismsDiffer>
    <experiments>3</experiments>
</comment>
<comment type="interaction">
    <interactant intactId="EBI-981985">
        <id>Q9Y5Y5</id>
    </interactant>
    <interactant intactId="EBI-373355">
        <id>Q5SR56</id>
        <label>MFSD14B</label>
    </interactant>
    <organismsDiffer>false</organismsDiffer>
    <experiments>3</experiments>
</comment>
<comment type="interaction">
    <interactant intactId="EBI-981985">
        <id>Q9Y5Y5</id>
    </interactant>
    <interactant intactId="EBI-6163737">
        <id>Q8N4V1</id>
        <label>MMGT1</label>
    </interactant>
    <organismsDiffer>false</organismsDiffer>
    <experiments>3</experiments>
</comment>
<comment type="interaction">
    <interactant intactId="EBI-981985">
        <id>Q9Y5Y5</id>
    </interactant>
    <interactant intactId="EBI-748974">
        <id>Q96CV9</id>
        <label>OPTN</label>
    </interactant>
    <organismsDiffer>false</organismsDiffer>
    <experiments>3</experiments>
</comment>
<comment type="interaction">
    <interactant intactId="EBI-981985">
        <id>Q9Y5Y5</id>
    </interactant>
    <interactant intactId="EBI-716063">
        <id>Q13113</id>
        <label>PDZK1IP1</label>
    </interactant>
    <organismsDiffer>false</organismsDiffer>
    <experiments>3</experiments>
</comment>
<comment type="interaction">
    <interactant intactId="EBI-981985">
        <id>Q9Y5Y5</id>
    </interactant>
    <interactant intactId="EBI-594747">
        <id>P40855</id>
        <label>PEX19</label>
    </interactant>
    <organismsDiffer>false</organismsDiffer>
    <experiments>29</experiments>
</comment>
<comment type="interaction">
    <interactant intactId="EBI-981985">
        <id>Q9Y5Y5</id>
    </interactant>
    <interactant intactId="EBI-594885">
        <id>P56589</id>
        <label>PEX3</label>
    </interactant>
    <organismsDiffer>false</organismsDiffer>
    <experiments>6</experiments>
</comment>
<comment type="interaction">
    <interactant intactId="EBI-981985">
        <id>Q9Y5Y5</id>
    </interactant>
    <interactant intactId="EBI-1050125">
        <id>O15173</id>
        <label>PGRMC2</label>
    </interactant>
    <organismsDiffer>false</organismsDiffer>
    <experiments>3</experiments>
</comment>
<comment type="interaction">
    <interactant intactId="EBI-981985">
        <id>Q9Y5Y5</id>
    </interactant>
    <interactant intactId="EBI-7545592">
        <id>Q9H6H4</id>
        <label>REEP4</label>
    </interactant>
    <organismsDiffer>false</organismsDiffer>
    <experiments>3</experiments>
</comment>
<comment type="interaction">
    <interactant intactId="EBI-981985">
        <id>Q9Y5Y5</id>
    </interactant>
    <interactant intactId="EBI-3923031">
        <id>Q14973</id>
        <label>SLC10A1</label>
    </interactant>
    <organismsDiffer>false</organismsDiffer>
    <experiments>3</experiments>
</comment>
<comment type="interaction">
    <interactant intactId="EBI-981985">
        <id>Q9Y5Y5</id>
    </interactant>
    <interactant intactId="EBI-18159983">
        <id>Q3KNW5</id>
        <label>SLC10A6</label>
    </interactant>
    <organismsDiffer>false</organismsDiffer>
    <experiments>3</experiments>
</comment>
<comment type="interaction">
    <interactant intactId="EBI-981985">
        <id>Q9Y5Y5</id>
    </interactant>
    <interactant intactId="EBI-17595455">
        <id>P54219-3</id>
        <label>SLC18A1</label>
    </interactant>
    <organismsDiffer>false</organismsDiffer>
    <experiments>3</experiments>
</comment>
<comment type="interaction">
    <interactant intactId="EBI-981985">
        <id>Q9Y5Y5</id>
    </interactant>
    <interactant intactId="EBI-17295964">
        <id>Q9NQQ7-3</id>
        <label>SLC35C2</label>
    </interactant>
    <organismsDiffer>false</organismsDiffer>
    <experiments>3</experiments>
</comment>
<comment type="interaction">
    <interactant intactId="EBI-981985">
        <id>Q9Y5Y5</id>
    </interactant>
    <interactant intactId="EBI-6447886">
        <id>Q9Y320</id>
        <label>TMX2</label>
    </interactant>
    <organismsDiffer>false</organismsDiffer>
    <experiments>3</experiments>
</comment>
<comment type="interaction">
    <interactant intactId="EBI-981985">
        <id>Q9Y5Y5</id>
    </interactant>
    <interactant intactId="EBI-519945">
        <id>Q02223</id>
        <label>TNFRSF17</label>
    </interactant>
    <organismsDiffer>false</organismsDiffer>
    <experiments>3</experiments>
</comment>
<comment type="interaction">
    <interactant intactId="EBI-981985">
        <id>Q9Y5Y5</id>
    </interactant>
    <interactant intactId="EBI-12837904">
        <id>Q96MV8</id>
        <label>ZDHHC15</label>
    </interactant>
    <organismsDiffer>false</organismsDiffer>
    <experiments>3</experiments>
</comment>
<comment type="subcellular location">
    <subcellularLocation>
        <location evidence="4 10">Peroxisome membrane</location>
        <topology evidence="4">Multi-pass membrane protein</topology>
    </subcellularLocation>
</comment>
<comment type="alternative products">
    <event type="alternative splicing"/>
    <isoform>
        <id>Q9Y5Y5-1</id>
        <name>1</name>
        <sequence type="displayed"/>
    </isoform>
    <isoform>
        <id>Q9Y5Y5-2</id>
        <name>2</name>
        <sequence type="described" ref="VSP_036593"/>
    </isoform>
</comment>
<comment type="disease" evidence="11">
    <disease id="DI-00919">
        <name>Peroxisome biogenesis disorder complementation group 9</name>
        <acronym>PBD-CG9</acronym>
        <description>A peroxisomal disorder arising from a failure of protein import into the peroxisomal membrane or matrix. The peroxisome biogenesis disorders (PBD group) are genetically heterogeneous with at least 14 distinct genetic groups as concluded from complementation studies. Include disorders are: Zellweger syndrome (ZWS), neonatal adrenoleukodystrophy (NALD), infantile Refsum disease (IRD), and classical rhizomelic chondrodysplasia punctata (RCDP). ZWS, NALD and IRD are distinct from RCDP and constitute a clinical continuum of overlapping phenotypes known as the Zellweger spectrum (PBD-ZSS).</description>
        <dbReference type="MIM" id="614876"/>
    </disease>
    <text>The disease is caused by variants affecting the gene represented in this entry.</text>
</comment>
<comment type="disease" evidence="11">
    <disease id="DI-03589">
        <name>Peroxisome biogenesis disorder 8A</name>
        <acronym>PBD8A</acronym>
        <description>A fatal peroxisome biogenesis disorder belonging to the Zellweger disease spectrum and clinically characterized by severe neurologic dysfunction with profound psychomotor retardation, severe hypotonia and neonatal seizures, craniofacial abnormalities, liver dysfunction, and biochemically by the absence of peroxisomes. Additional features include cardiovascular and skeletal defects, renal cysts, ocular abnormalities, and hearing impairment. Most severely affected individuals with the classic form of the disease (classic Zellweger syndrome) die within the first year of life.</description>
        <dbReference type="MIM" id="614876"/>
    </disease>
    <text>The disease is caused by variants affecting the gene represented in this entry.</text>
</comment>
<comment type="disease" evidence="9">
    <disease id="DI-03590">
        <name>Peroxisome biogenesis disorder 8B</name>
        <acronym>PBD8B</acronym>
        <description>A relatively mild peroxisome biogenesis disorder. Affected individuals manifest lower limb spasticity and ataxia resulting in wheelchair dependence. Other features include optic atrophy, cataracts, dysarthria, dysphagia, constipation, and a peripheral demyelinating motor and sensory neuropathy. Cognition is relatively preserved. Biochemical abnormalities are mild and include increased very-long-chain fatty acids (VLCFA), increased bile acid intermediates, and increased branched chain fatty acids. Phytanic acid alpha-oxidation, pristanic acid beta-oxidation, and red cell plasmalogen are normal.</description>
        <dbReference type="MIM" id="614877"/>
    </disease>
    <text>The disease is caused by variants affecting the gene represented in this entry.</text>
</comment>
<comment type="similarity">
    <text evidence="14">Belongs to the peroxin-16 family.</text>
</comment>
<reference key="1">
    <citation type="journal article" date="1998" name="Am. J. Hum. Genet.">
        <title>Mutation in PEX16 is causal in the peroxisome-deficient Zellweger syndrome of complementation group D.</title>
        <authorList>
            <person name="Honsho M."/>
            <person name="Tamura S."/>
            <person name="Shimozawa N."/>
            <person name="Suzuki Y."/>
            <person name="Kondo N."/>
            <person name="Fujiki Y."/>
        </authorList>
    </citation>
    <scope>NUCLEOTIDE SEQUENCE [MRNA] (ISOFORM 1)</scope>
    <scope>INVOLVEMENT IN PBD-CG9 AND PBD8A</scope>
    <scope>VARIANT ILE-116</scope>
</reference>
<reference key="2">
    <citation type="journal article" date="1999" name="J. Cell Biol.">
        <title>Peroxisome synthesis in the absence of preexisting peroxisomes.</title>
        <authorList>
            <person name="South S.T."/>
            <person name="Gould S.J."/>
        </authorList>
    </citation>
    <scope>NUCLEOTIDE SEQUENCE [MRNA] (ISOFORM 1)</scope>
    <scope>VARIANT ILE-116</scope>
</reference>
<reference key="3">
    <citation type="journal article" date="2006" name="Nature">
        <title>Human chromosome 11 DNA sequence and analysis including novel gene identification.</title>
        <authorList>
            <person name="Taylor T.D."/>
            <person name="Noguchi H."/>
            <person name="Totoki Y."/>
            <person name="Toyoda A."/>
            <person name="Kuroki Y."/>
            <person name="Dewar K."/>
            <person name="Lloyd C."/>
            <person name="Itoh T."/>
            <person name="Takeda T."/>
            <person name="Kim D.-W."/>
            <person name="She X."/>
            <person name="Barlow K.F."/>
            <person name="Bloom T."/>
            <person name="Bruford E."/>
            <person name="Chang J.L."/>
            <person name="Cuomo C.A."/>
            <person name="Eichler E."/>
            <person name="FitzGerald M.G."/>
            <person name="Jaffe D.B."/>
            <person name="LaButti K."/>
            <person name="Nicol R."/>
            <person name="Park H.-S."/>
            <person name="Seaman C."/>
            <person name="Sougnez C."/>
            <person name="Yang X."/>
            <person name="Zimmer A.R."/>
            <person name="Zody M.C."/>
            <person name="Birren B.W."/>
            <person name="Nusbaum C."/>
            <person name="Fujiyama A."/>
            <person name="Hattori M."/>
            <person name="Rogers J."/>
            <person name="Lander E.S."/>
            <person name="Sakaki Y."/>
        </authorList>
    </citation>
    <scope>NUCLEOTIDE SEQUENCE [LARGE SCALE GENOMIC DNA]</scope>
</reference>
<reference key="4">
    <citation type="journal article" date="2004" name="Genome Res.">
        <title>The status, quality, and expansion of the NIH full-length cDNA project: the Mammalian Gene Collection (MGC).</title>
        <authorList>
            <consortium name="The MGC Project Team"/>
        </authorList>
    </citation>
    <scope>NUCLEOTIDE SEQUENCE [LARGE SCALE MRNA] (ISOFORMS 1 AND 2)</scope>
    <scope>VARIANT ILE-116</scope>
    <source>
        <tissue>Lung</tissue>
    </source>
</reference>
<reference key="5">
    <citation type="journal article" date="2000" name="J. Cell Biol.">
        <title>PEX19 binds multiple peroxisomal membrane proteins, is predominantly cytoplasmic, and is required for peroxisome membrane synthesis.</title>
        <authorList>
            <person name="Sacksteder K.A."/>
            <person name="Jones J.M."/>
            <person name="South S.T."/>
            <person name="Li X."/>
            <person name="Liu Y."/>
            <person name="Gould S.J."/>
        </authorList>
    </citation>
    <scope>FUNCTION</scope>
    <scope>INTERACTION WITH PEX19</scope>
</reference>
<reference key="6">
    <citation type="journal article" date="2001" name="Mol. Cell. Biol.">
        <title>Human pex19p binds peroxisomal integral membrane proteins at regions distinct from their sorting sequences.</title>
        <authorList>
            <person name="Fransen M."/>
            <person name="Wylin T."/>
            <person name="Brees C."/>
            <person name="Mannaerts G.P."/>
            <person name="Van Veldhoven P.P."/>
        </authorList>
    </citation>
    <scope>INTERACTION WITH PEX19</scope>
    <scope>SUBCELLULAR LOCATION</scope>
</reference>
<reference key="7">
    <citation type="journal article" date="2002" name="J. Biol. Chem.">
        <title>The membrane biogenesis peroxin Pex16p. Topogenesis and functional roles in peroxisomal membrane assembly.</title>
        <authorList>
            <person name="Honsho M."/>
            <person name="Hiroshige T."/>
            <person name="Fujiki Y."/>
        </authorList>
    </citation>
    <scope>FUNCTION</scope>
    <scope>TOPOLOGY</scope>
</reference>
<reference key="8">
    <citation type="journal article" date="2004" name="J. Cell Biol.">
        <title>PEX19 is a predominantly cytosolic chaperone and import receptor for class 1 peroxisomal membrane proteins.</title>
        <authorList>
            <person name="Jones J.M."/>
            <person name="Morrell J.C."/>
            <person name="Gould S.J."/>
        </authorList>
    </citation>
    <scope>INTERACTION WITH PEX19</scope>
</reference>
<reference key="9">
    <citation type="journal article" date="2006" name="J. Cell Biol.">
        <title>The origin and maintenance of mammalian peroxisomes involves a de novo PEX16-dependent pathway from the ER.</title>
        <authorList>
            <person name="Kim P.K."/>
            <person name="Mullen R.T."/>
            <person name="Schumann U."/>
            <person name="Lippincott-Schwartz J."/>
        </authorList>
    </citation>
    <scope>FUNCTION</scope>
</reference>
<reference key="10">
    <citation type="journal article" date="2011" name="Proc. Natl. Acad. Sci. U.S.A.">
        <title>Sec16B is involved in the endoplasmic reticulum export of the peroxisomal membrane biogenesis factor peroxin 16 (Pex16) in mammalian cells.</title>
        <authorList>
            <person name="Yonekawa S."/>
            <person name="Furuno A."/>
            <person name="Baba T."/>
            <person name="Fujiki Y."/>
            <person name="Ogasawara Y."/>
            <person name="Yamamoto A."/>
            <person name="Tagaya M."/>
            <person name="Tani K."/>
        </authorList>
    </citation>
    <scope>SUBCELLULAR LOCATION</scope>
</reference>
<reference key="11">
    <citation type="journal article" date="2013" name="J. Proteome Res.">
        <title>Toward a comprehensive characterization of a human cancer cell phosphoproteome.</title>
        <authorList>
            <person name="Zhou H."/>
            <person name="Di Palma S."/>
            <person name="Preisinger C."/>
            <person name="Peng M."/>
            <person name="Polat A.N."/>
            <person name="Heck A.J."/>
            <person name="Mohammed S."/>
        </authorList>
    </citation>
    <scope>IDENTIFICATION BY MASS SPECTROMETRY [LARGE SCALE ANALYSIS]</scope>
    <source>
        <tissue>Cervix carcinoma</tissue>
    </source>
</reference>
<reference key="12">
    <citation type="journal article" date="2015" name="Proteomics">
        <title>N-terminome analysis of the human mitochondrial proteome.</title>
        <authorList>
            <person name="Vaca Jacome A.S."/>
            <person name="Rabilloud T."/>
            <person name="Schaeffer-Reiss C."/>
            <person name="Rompais M."/>
            <person name="Ayoub D."/>
            <person name="Lane L."/>
            <person name="Bairoch A."/>
            <person name="Van Dorsselaer A."/>
            <person name="Carapito C."/>
        </authorList>
    </citation>
    <scope>IDENTIFICATION BY MASS SPECTROMETRY [LARGE SCALE ANALYSIS]</scope>
</reference>
<reference key="13">
    <citation type="journal article" date="2010" name="J. Med. Genet.">
        <title>Identification of an unusual variant peroxisome biogenesis disorder caused by mutations in the PEX16 gene.</title>
        <authorList>
            <person name="Ebberink M.S."/>
            <person name="Csanyi B."/>
            <person name="Chong W.K."/>
            <person name="Denis S."/>
            <person name="Sharp P."/>
            <person name="Mooijer P.A."/>
            <person name="Dekker C.J."/>
            <person name="Spooner C."/>
            <person name="Ngu L.H."/>
            <person name="De Sousa C."/>
            <person name="Wanders R.J."/>
            <person name="Fietz M.J."/>
            <person name="Clayton P.T."/>
            <person name="Waterham H.R."/>
            <person name="Ferdinandusse S."/>
        </authorList>
    </citation>
    <scope>VARIANTS PBD8B VAL-252 DEL; THR-289 AND CYS-331</scope>
</reference>
<evidence type="ECO:0000255" key="1"/>
<evidence type="ECO:0000256" key="2">
    <source>
        <dbReference type="SAM" id="MobiDB-lite"/>
    </source>
</evidence>
<evidence type="ECO:0000269" key="3">
    <source>
    </source>
</evidence>
<evidence type="ECO:0000269" key="4">
    <source>
    </source>
</evidence>
<evidence type="ECO:0000269" key="5">
    <source>
    </source>
</evidence>
<evidence type="ECO:0000269" key="6">
    <source>
    </source>
</evidence>
<evidence type="ECO:0000269" key="7">
    <source>
    </source>
</evidence>
<evidence type="ECO:0000269" key="8">
    <source>
    </source>
</evidence>
<evidence type="ECO:0000269" key="9">
    <source>
    </source>
</evidence>
<evidence type="ECO:0000269" key="10">
    <source>
    </source>
</evidence>
<evidence type="ECO:0000269" key="11">
    <source>
    </source>
</evidence>
<evidence type="ECO:0000269" key="12">
    <source>
    </source>
</evidence>
<evidence type="ECO:0000303" key="13">
    <source>
    </source>
</evidence>
<evidence type="ECO:0000305" key="14"/>
<proteinExistence type="evidence at protein level"/>